<comment type="function">
    <text evidence="1">Protein kinase that may play an important role in cellular stress response. May be involved in the regulation of processes such as cell survival, neuronal excitability and renal sodium excretion (By similarity).</text>
</comment>
<comment type="catalytic activity">
    <reaction>
        <text>L-seryl-[protein] + ATP = O-phospho-L-seryl-[protein] + ADP + H(+)</text>
        <dbReference type="Rhea" id="RHEA:17989"/>
        <dbReference type="Rhea" id="RHEA-COMP:9863"/>
        <dbReference type="Rhea" id="RHEA-COMP:11604"/>
        <dbReference type="ChEBI" id="CHEBI:15378"/>
        <dbReference type="ChEBI" id="CHEBI:29999"/>
        <dbReference type="ChEBI" id="CHEBI:30616"/>
        <dbReference type="ChEBI" id="CHEBI:83421"/>
        <dbReference type="ChEBI" id="CHEBI:456216"/>
        <dbReference type="EC" id="2.7.11.1"/>
    </reaction>
</comment>
<comment type="catalytic activity">
    <reaction>
        <text>L-threonyl-[protein] + ATP = O-phospho-L-threonyl-[protein] + ADP + H(+)</text>
        <dbReference type="Rhea" id="RHEA:46608"/>
        <dbReference type="Rhea" id="RHEA-COMP:11060"/>
        <dbReference type="Rhea" id="RHEA-COMP:11605"/>
        <dbReference type="ChEBI" id="CHEBI:15378"/>
        <dbReference type="ChEBI" id="CHEBI:30013"/>
        <dbReference type="ChEBI" id="CHEBI:30616"/>
        <dbReference type="ChEBI" id="CHEBI:61977"/>
        <dbReference type="ChEBI" id="CHEBI:456216"/>
        <dbReference type="EC" id="2.7.11.1"/>
    </reaction>
</comment>
<comment type="subcellular location">
    <subcellularLocation>
        <location evidence="1">Cytoplasm</location>
    </subcellularLocation>
    <subcellularLocation>
        <location evidence="1">Nucleus</location>
    </subcellularLocation>
    <subcellularLocation>
        <location evidence="1">Endoplasmic reticulum</location>
    </subcellularLocation>
</comment>
<comment type="similarity">
    <text evidence="6">Belongs to the protein kinase superfamily. AGC Ser/Thr protein kinase family.</text>
</comment>
<proteinExistence type="evidence at transcript level"/>
<sequence length="431" mass="48870">MTIKTETEKPALTYSKTRGLVELITAFMKQRRMGLNDFIQKLATNSYACKHPEVQSILNLTPPQDPELMNSNPSPPPSPSQQINLGPSSNPSAKPSDFHFLKVIGKGSFGKVLLARHRTDDQFYAVKVLQKKAILKKKEEKHIMSERNVLLKNVKHPFLVGLHYSFQTADKLYFVLDYINGGELFYHLQRERCFLEPRARFYSAEIASALGYLHSLNIVYRDLKPENILLDSQGHIILTDFGLCKENIEPNGTTSTFCGTPEYLAPEVLHKQPYDRTVDWWCLGAVLYEMLYGLPPFYSRNTAEMYDNILNKPLQLKPNISNAARHLLEGLLQKDRTKRLGCKDDFTEIKNHVFFSPINWDDLNAKKMTPPFNPNVTGPNDLRHFDPEFTDEPVPSSIGCSPDCALATASIKEAAEAFVGFSYAPSMDSYL</sequence>
<protein>
    <recommendedName>
        <fullName>Serine/threonine-protein kinase Sgk1</fullName>
        <ecNumber>2.7.11.1</ecNumber>
    </recommendedName>
    <alternativeName>
        <fullName>Serum/glucocorticoid-regulated kinase 1</fullName>
    </alternativeName>
</protein>
<organism>
    <name type="scientific">Fundulus heteroclitus</name>
    <name type="common">Killifish</name>
    <name type="synonym">Mummichog</name>
    <dbReference type="NCBI Taxonomy" id="8078"/>
    <lineage>
        <taxon>Eukaryota</taxon>
        <taxon>Metazoa</taxon>
        <taxon>Chordata</taxon>
        <taxon>Craniata</taxon>
        <taxon>Vertebrata</taxon>
        <taxon>Euteleostomi</taxon>
        <taxon>Actinopterygii</taxon>
        <taxon>Neopterygii</taxon>
        <taxon>Teleostei</taxon>
        <taxon>Neoteleostei</taxon>
        <taxon>Acanthomorphata</taxon>
        <taxon>Ovalentaria</taxon>
        <taxon>Atherinomorphae</taxon>
        <taxon>Cyprinodontiformes</taxon>
        <taxon>Fundulidae</taxon>
        <taxon>Fundulus</taxon>
    </lineage>
</organism>
<evidence type="ECO:0000250" key="1"/>
<evidence type="ECO:0000255" key="2">
    <source>
        <dbReference type="PROSITE-ProRule" id="PRU00159"/>
    </source>
</evidence>
<evidence type="ECO:0000255" key="3">
    <source>
        <dbReference type="PROSITE-ProRule" id="PRU00618"/>
    </source>
</evidence>
<evidence type="ECO:0000255" key="4">
    <source>
        <dbReference type="PROSITE-ProRule" id="PRU10027"/>
    </source>
</evidence>
<evidence type="ECO:0000256" key="5">
    <source>
        <dbReference type="SAM" id="MobiDB-lite"/>
    </source>
</evidence>
<evidence type="ECO:0000305" key="6"/>
<gene>
    <name type="primary">sgk1</name>
    <name type="synonym">sgk</name>
</gene>
<dbReference type="EC" id="2.7.11.1"/>
<dbReference type="EMBL" id="AY800243">
    <property type="protein sequence ID" value="AAV80429.1"/>
    <property type="molecule type" value="mRNA"/>
</dbReference>
<dbReference type="SMR" id="Q5Q0U5"/>
<dbReference type="STRING" id="8078.ENSFHEP00000005880"/>
<dbReference type="Proteomes" id="UP000265000">
    <property type="component" value="Whole Genome Shotgun Assembly"/>
</dbReference>
<dbReference type="GO" id="GO:0005783">
    <property type="term" value="C:endoplasmic reticulum"/>
    <property type="evidence" value="ECO:0007669"/>
    <property type="project" value="UniProtKB-SubCell"/>
</dbReference>
<dbReference type="GO" id="GO:0005634">
    <property type="term" value="C:nucleus"/>
    <property type="evidence" value="ECO:0007669"/>
    <property type="project" value="UniProtKB-SubCell"/>
</dbReference>
<dbReference type="GO" id="GO:0005524">
    <property type="term" value="F:ATP binding"/>
    <property type="evidence" value="ECO:0007669"/>
    <property type="project" value="UniProtKB-KW"/>
</dbReference>
<dbReference type="GO" id="GO:0106310">
    <property type="term" value="F:protein serine kinase activity"/>
    <property type="evidence" value="ECO:0007669"/>
    <property type="project" value="RHEA"/>
</dbReference>
<dbReference type="GO" id="GO:0004674">
    <property type="term" value="F:protein serine/threonine kinase activity"/>
    <property type="evidence" value="ECO:0007669"/>
    <property type="project" value="UniProtKB-KW"/>
</dbReference>
<dbReference type="GO" id="GO:0006915">
    <property type="term" value="P:apoptotic process"/>
    <property type="evidence" value="ECO:0007669"/>
    <property type="project" value="UniProtKB-KW"/>
</dbReference>
<dbReference type="CDD" id="cd05575">
    <property type="entry name" value="STKc_SGK"/>
    <property type="match status" value="1"/>
</dbReference>
<dbReference type="FunFam" id="1.10.510.10:FF:000065">
    <property type="entry name" value="Non-specific serine/threonine protein kinase"/>
    <property type="match status" value="1"/>
</dbReference>
<dbReference type="FunFam" id="3.30.200.20:FF:000030">
    <property type="entry name" value="Non-specific serine/threonine protein kinase"/>
    <property type="match status" value="1"/>
</dbReference>
<dbReference type="Gene3D" id="3.30.200.20">
    <property type="entry name" value="Phosphorylase Kinase, domain 1"/>
    <property type="match status" value="1"/>
</dbReference>
<dbReference type="Gene3D" id="1.10.510.10">
    <property type="entry name" value="Transferase(Phosphotransferase) domain 1"/>
    <property type="match status" value="1"/>
</dbReference>
<dbReference type="InterPro" id="IPR000961">
    <property type="entry name" value="AGC-kinase_C"/>
</dbReference>
<dbReference type="InterPro" id="IPR011009">
    <property type="entry name" value="Kinase-like_dom_sf"/>
</dbReference>
<dbReference type="InterPro" id="IPR017892">
    <property type="entry name" value="Pkinase_C"/>
</dbReference>
<dbReference type="InterPro" id="IPR000719">
    <property type="entry name" value="Prot_kinase_dom"/>
</dbReference>
<dbReference type="InterPro" id="IPR017441">
    <property type="entry name" value="Protein_kinase_ATP_BS"/>
</dbReference>
<dbReference type="InterPro" id="IPR008271">
    <property type="entry name" value="Ser/Thr_kinase_AS"/>
</dbReference>
<dbReference type="PANTHER" id="PTHR24351">
    <property type="entry name" value="RIBOSOMAL PROTEIN S6 KINASE"/>
    <property type="match status" value="1"/>
</dbReference>
<dbReference type="Pfam" id="PF00069">
    <property type="entry name" value="Pkinase"/>
    <property type="match status" value="1"/>
</dbReference>
<dbReference type="Pfam" id="PF00433">
    <property type="entry name" value="Pkinase_C"/>
    <property type="match status" value="1"/>
</dbReference>
<dbReference type="SMART" id="SM00133">
    <property type="entry name" value="S_TK_X"/>
    <property type="match status" value="1"/>
</dbReference>
<dbReference type="SMART" id="SM00220">
    <property type="entry name" value="S_TKc"/>
    <property type="match status" value="1"/>
</dbReference>
<dbReference type="SUPFAM" id="SSF56112">
    <property type="entry name" value="Protein kinase-like (PK-like)"/>
    <property type="match status" value="1"/>
</dbReference>
<dbReference type="PROSITE" id="PS51285">
    <property type="entry name" value="AGC_KINASE_CTER"/>
    <property type="match status" value="1"/>
</dbReference>
<dbReference type="PROSITE" id="PS00107">
    <property type="entry name" value="PROTEIN_KINASE_ATP"/>
    <property type="match status" value="1"/>
</dbReference>
<dbReference type="PROSITE" id="PS50011">
    <property type="entry name" value="PROTEIN_KINASE_DOM"/>
    <property type="match status" value="1"/>
</dbReference>
<dbReference type="PROSITE" id="PS00108">
    <property type="entry name" value="PROTEIN_KINASE_ST"/>
    <property type="match status" value="1"/>
</dbReference>
<accession>Q5Q0U5</accession>
<name>SGK1_FUNHE</name>
<keyword id="KW-0053">Apoptosis</keyword>
<keyword id="KW-0067">ATP-binding</keyword>
<keyword id="KW-0963">Cytoplasm</keyword>
<keyword id="KW-0256">Endoplasmic reticulum</keyword>
<keyword id="KW-0418">Kinase</keyword>
<keyword id="KW-0547">Nucleotide-binding</keyword>
<keyword id="KW-0539">Nucleus</keyword>
<keyword id="KW-0597">Phosphoprotein</keyword>
<keyword id="KW-0723">Serine/threonine-protein kinase</keyword>
<keyword id="KW-0346">Stress response</keyword>
<keyword id="KW-0808">Transferase</keyword>
<feature type="chain" id="PRO_0000380132" description="Serine/threonine-protein kinase Sgk1">
    <location>
        <begin position="1"/>
        <end position="431"/>
    </location>
</feature>
<feature type="domain" description="Protein kinase" evidence="2">
    <location>
        <begin position="98"/>
        <end position="355"/>
    </location>
</feature>
<feature type="domain" description="AGC-kinase C-terminal" evidence="3">
    <location>
        <begin position="356"/>
        <end position="431"/>
    </location>
</feature>
<feature type="region of interest" description="Disordered" evidence="5">
    <location>
        <begin position="58"/>
        <end position="93"/>
    </location>
</feature>
<feature type="compositionally biased region" description="Polar residues" evidence="5">
    <location>
        <begin position="81"/>
        <end position="93"/>
    </location>
</feature>
<feature type="active site" description="Proton acceptor" evidence="2 4">
    <location>
        <position position="222"/>
    </location>
</feature>
<feature type="binding site" evidence="2">
    <location>
        <begin position="104"/>
        <end position="112"/>
    </location>
    <ligand>
        <name>ATP</name>
        <dbReference type="ChEBI" id="CHEBI:30616"/>
    </ligand>
</feature>
<feature type="binding site" evidence="2">
    <location>
        <position position="127"/>
    </location>
    <ligand>
        <name>ATP</name>
        <dbReference type="ChEBI" id="CHEBI:30616"/>
    </ligand>
</feature>
<reference key="1">
    <citation type="submission" date="2004-10" db="EMBL/GenBank/DDBJ databases">
        <authorList>
            <person name="Sato J.D."/>
            <person name="Clarke C.C."/>
            <person name="Stanton B.A."/>
        </authorList>
    </citation>
    <scope>NUCLEOTIDE SEQUENCE [MRNA]</scope>
    <source>
        <tissue>Liver</tissue>
    </source>
</reference>